<gene>
    <name evidence="1" type="primary">rlmN</name>
    <name type="ordered locus">Swit_2962</name>
</gene>
<comment type="function">
    <text evidence="1">Specifically methylates position 2 of adenine 2503 in 23S rRNA and position 2 of adenine 37 in tRNAs. m2A2503 modification seems to play a crucial role in the proofreading step occurring at the peptidyl transferase center and thus would serve to optimize ribosomal fidelity.</text>
</comment>
<comment type="catalytic activity">
    <reaction evidence="1">
        <text>adenosine(2503) in 23S rRNA + 2 reduced [2Fe-2S]-[ferredoxin] + 2 S-adenosyl-L-methionine = 2-methyladenosine(2503) in 23S rRNA + 5'-deoxyadenosine + L-methionine + 2 oxidized [2Fe-2S]-[ferredoxin] + S-adenosyl-L-homocysteine</text>
        <dbReference type="Rhea" id="RHEA:42916"/>
        <dbReference type="Rhea" id="RHEA-COMP:10000"/>
        <dbReference type="Rhea" id="RHEA-COMP:10001"/>
        <dbReference type="Rhea" id="RHEA-COMP:10152"/>
        <dbReference type="Rhea" id="RHEA-COMP:10282"/>
        <dbReference type="ChEBI" id="CHEBI:17319"/>
        <dbReference type="ChEBI" id="CHEBI:33737"/>
        <dbReference type="ChEBI" id="CHEBI:33738"/>
        <dbReference type="ChEBI" id="CHEBI:57844"/>
        <dbReference type="ChEBI" id="CHEBI:57856"/>
        <dbReference type="ChEBI" id="CHEBI:59789"/>
        <dbReference type="ChEBI" id="CHEBI:74411"/>
        <dbReference type="ChEBI" id="CHEBI:74497"/>
        <dbReference type="EC" id="2.1.1.192"/>
    </reaction>
</comment>
<comment type="catalytic activity">
    <reaction evidence="1">
        <text>adenosine(37) in tRNA + 2 reduced [2Fe-2S]-[ferredoxin] + 2 S-adenosyl-L-methionine = 2-methyladenosine(37) in tRNA + 5'-deoxyadenosine + L-methionine + 2 oxidized [2Fe-2S]-[ferredoxin] + S-adenosyl-L-homocysteine</text>
        <dbReference type="Rhea" id="RHEA:43332"/>
        <dbReference type="Rhea" id="RHEA-COMP:10000"/>
        <dbReference type="Rhea" id="RHEA-COMP:10001"/>
        <dbReference type="Rhea" id="RHEA-COMP:10162"/>
        <dbReference type="Rhea" id="RHEA-COMP:10485"/>
        <dbReference type="ChEBI" id="CHEBI:17319"/>
        <dbReference type="ChEBI" id="CHEBI:33737"/>
        <dbReference type="ChEBI" id="CHEBI:33738"/>
        <dbReference type="ChEBI" id="CHEBI:57844"/>
        <dbReference type="ChEBI" id="CHEBI:57856"/>
        <dbReference type="ChEBI" id="CHEBI:59789"/>
        <dbReference type="ChEBI" id="CHEBI:74411"/>
        <dbReference type="ChEBI" id="CHEBI:74497"/>
        <dbReference type="EC" id="2.1.1.192"/>
    </reaction>
</comment>
<comment type="cofactor">
    <cofactor evidence="1">
        <name>[4Fe-4S] cluster</name>
        <dbReference type="ChEBI" id="CHEBI:49883"/>
    </cofactor>
    <text evidence="1">Binds 1 [4Fe-4S] cluster. The cluster is coordinated with 3 cysteines and an exchangeable S-adenosyl-L-methionine.</text>
</comment>
<comment type="subcellular location">
    <subcellularLocation>
        <location evidence="1">Cytoplasm</location>
    </subcellularLocation>
</comment>
<comment type="miscellaneous">
    <text evidence="1">Reaction proceeds by a ping-pong mechanism involving intermediate methylation of a conserved cysteine residue.</text>
</comment>
<comment type="similarity">
    <text evidence="1">Belongs to the radical SAM superfamily. RlmN family.</text>
</comment>
<keyword id="KW-0004">4Fe-4S</keyword>
<keyword id="KW-0963">Cytoplasm</keyword>
<keyword id="KW-1015">Disulfide bond</keyword>
<keyword id="KW-0408">Iron</keyword>
<keyword id="KW-0411">Iron-sulfur</keyword>
<keyword id="KW-0479">Metal-binding</keyword>
<keyword id="KW-0489">Methyltransferase</keyword>
<keyword id="KW-1185">Reference proteome</keyword>
<keyword id="KW-0698">rRNA processing</keyword>
<keyword id="KW-0949">S-adenosyl-L-methionine</keyword>
<keyword id="KW-0808">Transferase</keyword>
<keyword id="KW-0819">tRNA processing</keyword>
<proteinExistence type="inferred from homology"/>
<dbReference type="EC" id="2.1.1.192" evidence="1"/>
<dbReference type="EMBL" id="CP000699">
    <property type="protein sequence ID" value="ABQ69314.1"/>
    <property type="molecule type" value="Genomic_DNA"/>
</dbReference>
<dbReference type="SMR" id="A5VAJ8"/>
<dbReference type="STRING" id="392499.Swit_2962"/>
<dbReference type="PaxDb" id="392499-Swit_2962"/>
<dbReference type="KEGG" id="swi:Swit_2962"/>
<dbReference type="eggNOG" id="COG0820">
    <property type="taxonomic scope" value="Bacteria"/>
</dbReference>
<dbReference type="HOGENOM" id="CLU_029101_0_0_5"/>
<dbReference type="OrthoDB" id="9793973at2"/>
<dbReference type="Proteomes" id="UP000001989">
    <property type="component" value="Chromosome"/>
</dbReference>
<dbReference type="GO" id="GO:0005737">
    <property type="term" value="C:cytoplasm"/>
    <property type="evidence" value="ECO:0007669"/>
    <property type="project" value="UniProtKB-SubCell"/>
</dbReference>
<dbReference type="GO" id="GO:0051539">
    <property type="term" value="F:4 iron, 4 sulfur cluster binding"/>
    <property type="evidence" value="ECO:0007669"/>
    <property type="project" value="UniProtKB-UniRule"/>
</dbReference>
<dbReference type="GO" id="GO:0046872">
    <property type="term" value="F:metal ion binding"/>
    <property type="evidence" value="ECO:0007669"/>
    <property type="project" value="UniProtKB-KW"/>
</dbReference>
<dbReference type="GO" id="GO:0070040">
    <property type="term" value="F:rRNA (adenine(2503)-C2-)-methyltransferase activity"/>
    <property type="evidence" value="ECO:0007669"/>
    <property type="project" value="UniProtKB-UniRule"/>
</dbReference>
<dbReference type="GO" id="GO:0019843">
    <property type="term" value="F:rRNA binding"/>
    <property type="evidence" value="ECO:0007669"/>
    <property type="project" value="UniProtKB-UniRule"/>
</dbReference>
<dbReference type="GO" id="GO:0002935">
    <property type="term" value="F:tRNA (adenine(37)-C2)-methyltransferase activity"/>
    <property type="evidence" value="ECO:0007669"/>
    <property type="project" value="UniProtKB-UniRule"/>
</dbReference>
<dbReference type="GO" id="GO:0000049">
    <property type="term" value="F:tRNA binding"/>
    <property type="evidence" value="ECO:0007669"/>
    <property type="project" value="UniProtKB-UniRule"/>
</dbReference>
<dbReference type="GO" id="GO:0070475">
    <property type="term" value="P:rRNA base methylation"/>
    <property type="evidence" value="ECO:0007669"/>
    <property type="project" value="UniProtKB-UniRule"/>
</dbReference>
<dbReference type="GO" id="GO:0030488">
    <property type="term" value="P:tRNA methylation"/>
    <property type="evidence" value="ECO:0007669"/>
    <property type="project" value="UniProtKB-UniRule"/>
</dbReference>
<dbReference type="CDD" id="cd01335">
    <property type="entry name" value="Radical_SAM"/>
    <property type="match status" value="1"/>
</dbReference>
<dbReference type="FunFam" id="3.20.20.70:FF:000008">
    <property type="entry name" value="Dual-specificity RNA methyltransferase RlmN"/>
    <property type="match status" value="1"/>
</dbReference>
<dbReference type="Gene3D" id="1.10.150.530">
    <property type="match status" value="1"/>
</dbReference>
<dbReference type="Gene3D" id="3.20.20.70">
    <property type="entry name" value="Aldolase class I"/>
    <property type="match status" value="1"/>
</dbReference>
<dbReference type="HAMAP" id="MF_01849">
    <property type="entry name" value="RNA_methyltr_RlmN"/>
    <property type="match status" value="1"/>
</dbReference>
<dbReference type="InterPro" id="IPR013785">
    <property type="entry name" value="Aldolase_TIM"/>
</dbReference>
<dbReference type="InterPro" id="IPR040072">
    <property type="entry name" value="Methyltransferase_A"/>
</dbReference>
<dbReference type="InterPro" id="IPR048641">
    <property type="entry name" value="RlmN_N"/>
</dbReference>
<dbReference type="InterPro" id="IPR027492">
    <property type="entry name" value="RNA_MTrfase_RlmN"/>
</dbReference>
<dbReference type="InterPro" id="IPR004383">
    <property type="entry name" value="rRNA_lsu_MTrfase_RlmN/Cfr"/>
</dbReference>
<dbReference type="InterPro" id="IPR007197">
    <property type="entry name" value="rSAM"/>
</dbReference>
<dbReference type="NCBIfam" id="TIGR00048">
    <property type="entry name" value="rRNA_mod_RlmN"/>
    <property type="match status" value="1"/>
</dbReference>
<dbReference type="PANTHER" id="PTHR30544">
    <property type="entry name" value="23S RRNA METHYLTRANSFERASE"/>
    <property type="match status" value="1"/>
</dbReference>
<dbReference type="PANTHER" id="PTHR30544:SF5">
    <property type="entry name" value="RADICAL SAM CORE DOMAIN-CONTAINING PROTEIN"/>
    <property type="match status" value="1"/>
</dbReference>
<dbReference type="Pfam" id="PF04055">
    <property type="entry name" value="Radical_SAM"/>
    <property type="match status" value="1"/>
</dbReference>
<dbReference type="Pfam" id="PF21016">
    <property type="entry name" value="RlmN_N"/>
    <property type="match status" value="1"/>
</dbReference>
<dbReference type="PIRSF" id="PIRSF006004">
    <property type="entry name" value="CHP00048"/>
    <property type="match status" value="1"/>
</dbReference>
<dbReference type="SFLD" id="SFLDF00275">
    <property type="entry name" value="adenosine_C2_methyltransferase"/>
    <property type="match status" value="1"/>
</dbReference>
<dbReference type="SFLD" id="SFLDG01062">
    <property type="entry name" value="methyltransferase_(Class_A)"/>
    <property type="match status" value="1"/>
</dbReference>
<dbReference type="SUPFAM" id="SSF102114">
    <property type="entry name" value="Radical SAM enzymes"/>
    <property type="match status" value="1"/>
</dbReference>
<dbReference type="PROSITE" id="PS51918">
    <property type="entry name" value="RADICAL_SAM"/>
    <property type="match status" value="1"/>
</dbReference>
<protein>
    <recommendedName>
        <fullName evidence="1">Dual-specificity RNA methyltransferase RlmN</fullName>
        <ecNumber evidence="1">2.1.1.192</ecNumber>
    </recommendedName>
    <alternativeName>
        <fullName evidence="1">23S rRNA (adenine(2503)-C(2))-methyltransferase</fullName>
    </alternativeName>
    <alternativeName>
        <fullName evidence="1">23S rRNA m2A2503 methyltransferase</fullName>
    </alternativeName>
    <alternativeName>
        <fullName evidence="1">Ribosomal RNA large subunit methyltransferase N</fullName>
    </alternativeName>
    <alternativeName>
        <fullName evidence="1">tRNA (adenine(37)-C(2))-methyltransferase</fullName>
    </alternativeName>
    <alternativeName>
        <fullName evidence="1">tRNA m2A37 methyltransferase</fullName>
    </alternativeName>
</protein>
<accession>A5VAJ8</accession>
<organism>
    <name type="scientific">Rhizorhabdus wittichii (strain DSM 6014 / CCUG 31198 / JCM 15750 / NBRC 105917 / EY 4224 / RW1)</name>
    <name type="common">Sphingomonas wittichii</name>
    <dbReference type="NCBI Taxonomy" id="392499"/>
    <lineage>
        <taxon>Bacteria</taxon>
        <taxon>Pseudomonadati</taxon>
        <taxon>Pseudomonadota</taxon>
        <taxon>Alphaproteobacteria</taxon>
        <taxon>Sphingomonadales</taxon>
        <taxon>Sphingomonadaceae</taxon>
        <taxon>Rhizorhabdus</taxon>
    </lineage>
</organism>
<sequence>MNHPQPITMPIPGHIDPVPVPRDLKPRVDGRIDLLGLSRDDLRMALETAQLEPRQAKLRAKQLWHWIYNRGATDFAVMTDIAKDMRGWLDQRFVVSRPEVVEAQVSTDGTRKWLLRSDDGQDYEMVFIPDADRGTLCVSSQVGCTLNCRFCHTGTMKLVRNLTPAEIVGQVMLARDALGEWPSQPEGRMLTNIVMMGMGEPLYNFDNVRDALKLVMDGDGLALSKRRITLSTAGVVPMMARAGEEIGVNLAVSLHAITKEVRDEIVPLNRKYGIEDLLQACADYPGANNARRITFEYVMLKDKNDRDEDALELVRLIRKYRLPAKVNLIPFNPWPGAPYECSDPDRVARFSDLIFKAGISAPVRTPRGRDIMAACGQLKSAAEKKSRAELDRMAAEKQAALG</sequence>
<feature type="chain" id="PRO_0000350423" description="Dual-specificity RNA methyltransferase RlmN">
    <location>
        <begin position="1"/>
        <end position="402"/>
    </location>
</feature>
<feature type="domain" description="Radical SAM core" evidence="2">
    <location>
        <begin position="130"/>
        <end position="370"/>
    </location>
</feature>
<feature type="active site" description="Proton acceptor" evidence="1">
    <location>
        <position position="124"/>
    </location>
</feature>
<feature type="active site" description="S-methylcysteine intermediate" evidence="1">
    <location>
        <position position="375"/>
    </location>
</feature>
<feature type="binding site" evidence="1">
    <location>
        <position position="144"/>
    </location>
    <ligand>
        <name>[4Fe-4S] cluster</name>
        <dbReference type="ChEBI" id="CHEBI:49883"/>
        <note>4Fe-4S-S-AdoMet</note>
    </ligand>
</feature>
<feature type="binding site" evidence="1">
    <location>
        <position position="148"/>
    </location>
    <ligand>
        <name>[4Fe-4S] cluster</name>
        <dbReference type="ChEBI" id="CHEBI:49883"/>
        <note>4Fe-4S-S-AdoMet</note>
    </ligand>
</feature>
<feature type="binding site" evidence="1">
    <location>
        <position position="151"/>
    </location>
    <ligand>
        <name>[4Fe-4S] cluster</name>
        <dbReference type="ChEBI" id="CHEBI:49883"/>
        <note>4Fe-4S-S-AdoMet</note>
    </ligand>
</feature>
<feature type="binding site" evidence="1">
    <location>
        <begin position="199"/>
        <end position="200"/>
    </location>
    <ligand>
        <name>S-adenosyl-L-methionine</name>
        <dbReference type="ChEBI" id="CHEBI:59789"/>
    </ligand>
</feature>
<feature type="binding site" evidence="1">
    <location>
        <position position="231"/>
    </location>
    <ligand>
        <name>S-adenosyl-L-methionine</name>
        <dbReference type="ChEBI" id="CHEBI:59789"/>
    </ligand>
</feature>
<feature type="binding site" evidence="1">
    <location>
        <begin position="253"/>
        <end position="255"/>
    </location>
    <ligand>
        <name>S-adenosyl-L-methionine</name>
        <dbReference type="ChEBI" id="CHEBI:59789"/>
    </ligand>
</feature>
<feature type="binding site" evidence="1">
    <location>
        <position position="332"/>
    </location>
    <ligand>
        <name>S-adenosyl-L-methionine</name>
        <dbReference type="ChEBI" id="CHEBI:59789"/>
    </ligand>
</feature>
<feature type="disulfide bond" description="(transient)" evidence="1">
    <location>
        <begin position="137"/>
        <end position="375"/>
    </location>
</feature>
<name>RLMN_RHIWR</name>
<evidence type="ECO:0000255" key="1">
    <source>
        <dbReference type="HAMAP-Rule" id="MF_01849"/>
    </source>
</evidence>
<evidence type="ECO:0000255" key="2">
    <source>
        <dbReference type="PROSITE-ProRule" id="PRU01266"/>
    </source>
</evidence>
<reference key="1">
    <citation type="journal article" date="2010" name="J. Bacteriol.">
        <title>Genome sequence of the dioxin-mineralizing bacterium Sphingomonas wittichii RW1.</title>
        <authorList>
            <person name="Miller T.R."/>
            <person name="Delcher A.L."/>
            <person name="Salzberg S.L."/>
            <person name="Saunders E."/>
            <person name="Detter J.C."/>
            <person name="Halden R.U."/>
        </authorList>
    </citation>
    <scope>NUCLEOTIDE SEQUENCE [LARGE SCALE GENOMIC DNA]</scope>
    <source>
        <strain>DSM 6014 / CCUG 31198 / JCM 15750 / NBRC 105917 / EY 4224 / RW1</strain>
    </source>
</reference>